<organism>
    <name type="scientific">Staphylococcus aureus (strain MRSA252)</name>
    <dbReference type="NCBI Taxonomy" id="282458"/>
    <lineage>
        <taxon>Bacteria</taxon>
        <taxon>Bacillati</taxon>
        <taxon>Bacillota</taxon>
        <taxon>Bacilli</taxon>
        <taxon>Bacillales</taxon>
        <taxon>Staphylococcaceae</taxon>
        <taxon>Staphylococcus</taxon>
    </lineage>
</organism>
<protein>
    <recommendedName>
        <fullName evidence="1">Phosphate acyltransferase</fullName>
        <ecNumber evidence="1">2.3.1.274</ecNumber>
    </recommendedName>
    <alternativeName>
        <fullName evidence="1">Acyl-ACP phosphotransacylase</fullName>
    </alternativeName>
    <alternativeName>
        <fullName evidence="1">Acyl-[acyl-carrier-protein]--phosphate acyltransferase</fullName>
    </alternativeName>
    <alternativeName>
        <fullName evidence="1">Phosphate-acyl-ACP acyltransferase</fullName>
    </alternativeName>
</protein>
<feature type="chain" id="PRO_0000189938" description="Phosphate acyltransferase">
    <location>
        <begin position="1"/>
        <end position="328"/>
    </location>
</feature>
<comment type="function">
    <text evidence="1">Catalyzes the reversible formation of acyl-phosphate (acyl-PO(4)) from acyl-[acyl-carrier-protein] (acyl-ACP). This enzyme utilizes acyl-ACP as fatty acyl donor, but not acyl-CoA.</text>
</comment>
<comment type="catalytic activity">
    <reaction evidence="1">
        <text>a fatty acyl-[ACP] + phosphate = an acyl phosphate + holo-[ACP]</text>
        <dbReference type="Rhea" id="RHEA:42292"/>
        <dbReference type="Rhea" id="RHEA-COMP:9685"/>
        <dbReference type="Rhea" id="RHEA-COMP:14125"/>
        <dbReference type="ChEBI" id="CHEBI:43474"/>
        <dbReference type="ChEBI" id="CHEBI:59918"/>
        <dbReference type="ChEBI" id="CHEBI:64479"/>
        <dbReference type="ChEBI" id="CHEBI:138651"/>
        <dbReference type="EC" id="2.3.1.274"/>
    </reaction>
</comment>
<comment type="pathway">
    <text evidence="1">Lipid metabolism; phospholipid metabolism.</text>
</comment>
<comment type="subunit">
    <text evidence="1">Homodimer. Probably interacts with PlsY.</text>
</comment>
<comment type="subcellular location">
    <subcellularLocation>
        <location evidence="1">Cytoplasm</location>
    </subcellularLocation>
    <text evidence="1">Associated with the membrane possibly through PlsY.</text>
</comment>
<comment type="similarity">
    <text evidence="1">Belongs to the PlsX family.</text>
</comment>
<sequence>MVKLAIDMMGGDNAPDIVLEAVQKAVEDFKDLEIILFGDEKKYNLNHERIEFRHCSEKIEMEDEPVRAIKRKKDSSMVKMAEAVKSGEADGCVSAGNTGALMSAGLFIVGRIKGVARPALVVTLPTIDGKGFVFLDVGANADAKPEHLLQYAQLGDIYAQKIRGIDNPKISLLNIGTEPAKGNSLTKKSYELLNQDHSLNFVGNIEAKTLMDGDTDVVVTDGYTGNMVLKNLEGTAKSIGKMLKDTIMSSTKNKIAGAILKKDLAEFAKKMDYSEYGGSVLLGLEGTVVKAHGSSNAKAFYSAIRQAKIAGEQNIVQTMKETVGESNE</sequence>
<gene>
    <name evidence="1" type="primary">plsX</name>
    <name type="ordered locus">SAR1205</name>
</gene>
<accession>Q6GHK6</accession>
<name>PLSX_STAAR</name>
<evidence type="ECO:0000255" key="1">
    <source>
        <dbReference type="HAMAP-Rule" id="MF_00019"/>
    </source>
</evidence>
<dbReference type="EC" id="2.3.1.274" evidence="1"/>
<dbReference type="EMBL" id="BX571856">
    <property type="protein sequence ID" value="CAG40207.1"/>
    <property type="molecule type" value="Genomic_DNA"/>
</dbReference>
<dbReference type="RefSeq" id="WP_000239746.1">
    <property type="nucleotide sequence ID" value="NC_002952.2"/>
</dbReference>
<dbReference type="SMR" id="Q6GHK6"/>
<dbReference type="KEGG" id="sar:SAR1205"/>
<dbReference type="HOGENOM" id="CLU_039379_1_1_9"/>
<dbReference type="UniPathway" id="UPA00085"/>
<dbReference type="Proteomes" id="UP000000596">
    <property type="component" value="Chromosome"/>
</dbReference>
<dbReference type="GO" id="GO:0005737">
    <property type="term" value="C:cytoplasm"/>
    <property type="evidence" value="ECO:0007669"/>
    <property type="project" value="UniProtKB-SubCell"/>
</dbReference>
<dbReference type="GO" id="GO:0043811">
    <property type="term" value="F:phosphate:acyl-[acyl carrier protein] acyltransferase activity"/>
    <property type="evidence" value="ECO:0007669"/>
    <property type="project" value="UniProtKB-UniRule"/>
</dbReference>
<dbReference type="GO" id="GO:0006633">
    <property type="term" value="P:fatty acid biosynthetic process"/>
    <property type="evidence" value="ECO:0007669"/>
    <property type="project" value="UniProtKB-UniRule"/>
</dbReference>
<dbReference type="GO" id="GO:0008654">
    <property type="term" value="P:phospholipid biosynthetic process"/>
    <property type="evidence" value="ECO:0007669"/>
    <property type="project" value="UniProtKB-KW"/>
</dbReference>
<dbReference type="Gene3D" id="3.40.718.10">
    <property type="entry name" value="Isopropylmalate Dehydrogenase"/>
    <property type="match status" value="1"/>
</dbReference>
<dbReference type="HAMAP" id="MF_00019">
    <property type="entry name" value="PlsX"/>
    <property type="match status" value="1"/>
</dbReference>
<dbReference type="InterPro" id="IPR003664">
    <property type="entry name" value="FA_synthesis"/>
</dbReference>
<dbReference type="InterPro" id="IPR012281">
    <property type="entry name" value="Phospholipid_synth_PlsX-like"/>
</dbReference>
<dbReference type="NCBIfam" id="TIGR00182">
    <property type="entry name" value="plsX"/>
    <property type="match status" value="1"/>
</dbReference>
<dbReference type="PANTHER" id="PTHR30100">
    <property type="entry name" value="FATTY ACID/PHOSPHOLIPID SYNTHESIS PROTEIN PLSX"/>
    <property type="match status" value="1"/>
</dbReference>
<dbReference type="PANTHER" id="PTHR30100:SF1">
    <property type="entry name" value="PHOSPHATE ACYLTRANSFERASE"/>
    <property type="match status" value="1"/>
</dbReference>
<dbReference type="Pfam" id="PF02504">
    <property type="entry name" value="FA_synthesis"/>
    <property type="match status" value="1"/>
</dbReference>
<dbReference type="PIRSF" id="PIRSF002465">
    <property type="entry name" value="Phsphlp_syn_PlsX"/>
    <property type="match status" value="1"/>
</dbReference>
<dbReference type="SUPFAM" id="SSF53659">
    <property type="entry name" value="Isocitrate/Isopropylmalate dehydrogenase-like"/>
    <property type="match status" value="1"/>
</dbReference>
<keyword id="KW-0963">Cytoplasm</keyword>
<keyword id="KW-0444">Lipid biosynthesis</keyword>
<keyword id="KW-0443">Lipid metabolism</keyword>
<keyword id="KW-0594">Phospholipid biosynthesis</keyword>
<keyword id="KW-1208">Phospholipid metabolism</keyword>
<keyword id="KW-0808">Transferase</keyword>
<proteinExistence type="inferred from homology"/>
<reference key="1">
    <citation type="journal article" date="2004" name="Proc. Natl. Acad. Sci. U.S.A.">
        <title>Complete genomes of two clinical Staphylococcus aureus strains: evidence for the rapid evolution of virulence and drug resistance.</title>
        <authorList>
            <person name="Holden M.T.G."/>
            <person name="Feil E.J."/>
            <person name="Lindsay J.A."/>
            <person name="Peacock S.J."/>
            <person name="Day N.P.J."/>
            <person name="Enright M.C."/>
            <person name="Foster T.J."/>
            <person name="Moore C.E."/>
            <person name="Hurst L."/>
            <person name="Atkin R."/>
            <person name="Barron A."/>
            <person name="Bason N."/>
            <person name="Bentley S.D."/>
            <person name="Chillingworth C."/>
            <person name="Chillingworth T."/>
            <person name="Churcher C."/>
            <person name="Clark L."/>
            <person name="Corton C."/>
            <person name="Cronin A."/>
            <person name="Doggett J."/>
            <person name="Dowd L."/>
            <person name="Feltwell T."/>
            <person name="Hance Z."/>
            <person name="Harris B."/>
            <person name="Hauser H."/>
            <person name="Holroyd S."/>
            <person name="Jagels K."/>
            <person name="James K.D."/>
            <person name="Lennard N."/>
            <person name="Line A."/>
            <person name="Mayes R."/>
            <person name="Moule S."/>
            <person name="Mungall K."/>
            <person name="Ormond D."/>
            <person name="Quail M.A."/>
            <person name="Rabbinowitsch E."/>
            <person name="Rutherford K.M."/>
            <person name="Sanders M."/>
            <person name="Sharp S."/>
            <person name="Simmonds M."/>
            <person name="Stevens K."/>
            <person name="Whitehead S."/>
            <person name="Barrell B.G."/>
            <person name="Spratt B.G."/>
            <person name="Parkhill J."/>
        </authorList>
    </citation>
    <scope>NUCLEOTIDE SEQUENCE [LARGE SCALE GENOMIC DNA]</scope>
    <source>
        <strain>MRSA252</strain>
    </source>
</reference>